<accession>Q0KCS0</accession>
<comment type="function">
    <text evidence="1">NDH-1 shuttles electrons from NADH, via FMN and iron-sulfur (Fe-S) centers, to quinones in the respiratory chain. The immediate electron acceptor for the enzyme in this species is believed to be ubiquinone. Couples the redox reaction to proton translocation (for every two electrons transferred, four hydrogen ions are translocated across the cytoplasmic membrane), and thus conserves the redox energy in a proton gradient.</text>
</comment>
<comment type="catalytic activity">
    <reaction evidence="1">
        <text>a quinone + NADH + 5 H(+)(in) = a quinol + NAD(+) + 4 H(+)(out)</text>
        <dbReference type="Rhea" id="RHEA:57888"/>
        <dbReference type="ChEBI" id="CHEBI:15378"/>
        <dbReference type="ChEBI" id="CHEBI:24646"/>
        <dbReference type="ChEBI" id="CHEBI:57540"/>
        <dbReference type="ChEBI" id="CHEBI:57945"/>
        <dbReference type="ChEBI" id="CHEBI:132124"/>
    </reaction>
</comment>
<comment type="subunit">
    <text evidence="1">NDH-1 is composed of 14 different subunits. Subunits NuoA, H, J, K, L, M, N constitute the membrane sector of the complex.</text>
</comment>
<comment type="subcellular location">
    <subcellularLocation>
        <location evidence="1">Cell inner membrane</location>
        <topology evidence="1">Multi-pass membrane protein</topology>
    </subcellularLocation>
</comment>
<comment type="similarity">
    <text evidence="1">Belongs to the complex I subunit 4L family.</text>
</comment>
<feature type="chain" id="PRO_0000390181" description="NADH-quinone oxidoreductase subunit K">
    <location>
        <begin position="1"/>
        <end position="101"/>
    </location>
</feature>
<feature type="transmembrane region" description="Helical" evidence="1">
    <location>
        <begin position="4"/>
        <end position="24"/>
    </location>
</feature>
<feature type="transmembrane region" description="Helical" evidence="1">
    <location>
        <begin position="30"/>
        <end position="50"/>
    </location>
</feature>
<feature type="transmembrane region" description="Helical" evidence="1">
    <location>
        <begin position="61"/>
        <end position="81"/>
    </location>
</feature>
<proteinExistence type="inferred from homology"/>
<organism>
    <name type="scientific">Cupriavidus necator (strain ATCC 17699 / DSM 428 / KCTC 22496 / NCIMB 10442 / H16 / Stanier 337)</name>
    <name type="common">Ralstonia eutropha</name>
    <dbReference type="NCBI Taxonomy" id="381666"/>
    <lineage>
        <taxon>Bacteria</taxon>
        <taxon>Pseudomonadati</taxon>
        <taxon>Pseudomonadota</taxon>
        <taxon>Betaproteobacteria</taxon>
        <taxon>Burkholderiales</taxon>
        <taxon>Burkholderiaceae</taxon>
        <taxon>Cupriavidus</taxon>
    </lineage>
</organism>
<protein>
    <recommendedName>
        <fullName evidence="1">NADH-quinone oxidoreductase subunit K</fullName>
        <ecNumber evidence="1">7.1.1.-</ecNumber>
    </recommendedName>
    <alternativeName>
        <fullName evidence="1">NADH dehydrogenase I subunit K</fullName>
    </alternativeName>
    <alternativeName>
        <fullName evidence="1">NDH-1 subunit K</fullName>
    </alternativeName>
</protein>
<keyword id="KW-0997">Cell inner membrane</keyword>
<keyword id="KW-1003">Cell membrane</keyword>
<keyword id="KW-0472">Membrane</keyword>
<keyword id="KW-0520">NAD</keyword>
<keyword id="KW-0874">Quinone</keyword>
<keyword id="KW-1185">Reference proteome</keyword>
<keyword id="KW-1278">Translocase</keyword>
<keyword id="KW-0812">Transmembrane</keyword>
<keyword id="KW-1133">Transmembrane helix</keyword>
<keyword id="KW-0813">Transport</keyword>
<keyword id="KW-0830">Ubiquinone</keyword>
<reference key="1">
    <citation type="journal article" date="2006" name="Nat. Biotechnol.">
        <title>Genome sequence of the bioplastic-producing 'Knallgas' bacterium Ralstonia eutropha H16.</title>
        <authorList>
            <person name="Pohlmann A."/>
            <person name="Fricke W.F."/>
            <person name="Reinecke F."/>
            <person name="Kusian B."/>
            <person name="Liesegang H."/>
            <person name="Cramm R."/>
            <person name="Eitinger T."/>
            <person name="Ewering C."/>
            <person name="Poetter M."/>
            <person name="Schwartz E."/>
            <person name="Strittmatter A."/>
            <person name="Voss I."/>
            <person name="Gottschalk G."/>
            <person name="Steinbuechel A."/>
            <person name="Friedrich B."/>
            <person name="Bowien B."/>
        </authorList>
    </citation>
    <scope>NUCLEOTIDE SEQUENCE [LARGE SCALE GENOMIC DNA]</scope>
    <source>
        <strain>ATCC 17699 / DSM 428 / KCTC 22496 / NCIMB 10442 / H16 / Stanier 337</strain>
    </source>
</reference>
<evidence type="ECO:0000255" key="1">
    <source>
        <dbReference type="HAMAP-Rule" id="MF_01456"/>
    </source>
</evidence>
<gene>
    <name evidence="1" type="primary">nuoK</name>
    <name type="ordered locus">H16_A1060</name>
</gene>
<sequence length="101" mass="10951">MLSLAHFLVLGAILFAISIVGIFLNRKNVIVLLMAIELMLLAVNINFVAFSHYLGDLAGQVFVFFILTVAAAESAIGLAILVVLFRNLDTINVDDMDTLKG</sequence>
<name>NUOK_CUPNH</name>
<dbReference type="EC" id="7.1.1.-" evidence="1"/>
<dbReference type="EMBL" id="AM260479">
    <property type="protein sequence ID" value="CAJ92201.1"/>
    <property type="molecule type" value="Genomic_DNA"/>
</dbReference>
<dbReference type="RefSeq" id="WP_010809122.1">
    <property type="nucleotide sequence ID" value="NZ_CP039287.1"/>
</dbReference>
<dbReference type="SMR" id="Q0KCS0"/>
<dbReference type="STRING" id="381666.H16_A1060"/>
<dbReference type="GeneID" id="98339542"/>
<dbReference type="KEGG" id="reh:H16_A1060"/>
<dbReference type="eggNOG" id="COG0713">
    <property type="taxonomic scope" value="Bacteria"/>
</dbReference>
<dbReference type="HOGENOM" id="CLU_144724_2_0_4"/>
<dbReference type="OrthoDB" id="9801357at2"/>
<dbReference type="Proteomes" id="UP000008210">
    <property type="component" value="Chromosome 1"/>
</dbReference>
<dbReference type="GO" id="GO:0030964">
    <property type="term" value="C:NADH dehydrogenase complex"/>
    <property type="evidence" value="ECO:0007669"/>
    <property type="project" value="TreeGrafter"/>
</dbReference>
<dbReference type="GO" id="GO:0005886">
    <property type="term" value="C:plasma membrane"/>
    <property type="evidence" value="ECO:0007669"/>
    <property type="project" value="UniProtKB-SubCell"/>
</dbReference>
<dbReference type="GO" id="GO:0050136">
    <property type="term" value="F:NADH:ubiquinone reductase (non-electrogenic) activity"/>
    <property type="evidence" value="ECO:0007669"/>
    <property type="project" value="UniProtKB-UniRule"/>
</dbReference>
<dbReference type="GO" id="GO:0048038">
    <property type="term" value="F:quinone binding"/>
    <property type="evidence" value="ECO:0007669"/>
    <property type="project" value="UniProtKB-KW"/>
</dbReference>
<dbReference type="GO" id="GO:0042773">
    <property type="term" value="P:ATP synthesis coupled electron transport"/>
    <property type="evidence" value="ECO:0007669"/>
    <property type="project" value="InterPro"/>
</dbReference>
<dbReference type="FunFam" id="1.10.287.3510:FF:000001">
    <property type="entry name" value="NADH-quinone oxidoreductase subunit K"/>
    <property type="match status" value="1"/>
</dbReference>
<dbReference type="Gene3D" id="1.10.287.3510">
    <property type="match status" value="1"/>
</dbReference>
<dbReference type="HAMAP" id="MF_01456">
    <property type="entry name" value="NDH1_NuoK"/>
    <property type="match status" value="1"/>
</dbReference>
<dbReference type="InterPro" id="IPR001133">
    <property type="entry name" value="NADH_UbQ_OxRdtase_chain4L/K"/>
</dbReference>
<dbReference type="InterPro" id="IPR039428">
    <property type="entry name" value="NUOK/Mnh_C1-like"/>
</dbReference>
<dbReference type="NCBIfam" id="NF004320">
    <property type="entry name" value="PRK05715.1-2"/>
    <property type="match status" value="1"/>
</dbReference>
<dbReference type="NCBIfam" id="NF004321">
    <property type="entry name" value="PRK05715.1-3"/>
    <property type="match status" value="1"/>
</dbReference>
<dbReference type="NCBIfam" id="NF004323">
    <property type="entry name" value="PRK05715.1-5"/>
    <property type="match status" value="1"/>
</dbReference>
<dbReference type="PANTHER" id="PTHR11434:SF21">
    <property type="entry name" value="NADH DEHYDROGENASE SUBUNIT 4L-RELATED"/>
    <property type="match status" value="1"/>
</dbReference>
<dbReference type="PANTHER" id="PTHR11434">
    <property type="entry name" value="NADH-UBIQUINONE OXIDOREDUCTASE SUBUNIT ND4L"/>
    <property type="match status" value="1"/>
</dbReference>
<dbReference type="Pfam" id="PF00420">
    <property type="entry name" value="Oxidored_q2"/>
    <property type="match status" value="1"/>
</dbReference>